<accession>P32310</accession>
<proteinExistence type="evidence at protein level"/>
<feature type="chain" id="PRO_0000197756" description="Blue-sensitive opsin">
    <location>
        <begin position="1"/>
        <end position="351"/>
    </location>
</feature>
<feature type="topological domain" description="Extracellular" evidence="2">
    <location>
        <begin position="1"/>
        <end position="40"/>
    </location>
</feature>
<feature type="transmembrane region" description="Helical; Name=1" evidence="2">
    <location>
        <begin position="41"/>
        <end position="65"/>
    </location>
</feature>
<feature type="topological domain" description="Cytoplasmic" evidence="2">
    <location>
        <begin position="66"/>
        <end position="77"/>
    </location>
</feature>
<feature type="transmembrane region" description="Helical; Name=2" evidence="2">
    <location>
        <begin position="78"/>
        <end position="103"/>
    </location>
</feature>
<feature type="topological domain" description="Extracellular" evidence="2">
    <location>
        <begin position="104"/>
        <end position="117"/>
    </location>
</feature>
<feature type="transmembrane region" description="Helical; Name=3" evidence="2">
    <location>
        <begin position="118"/>
        <end position="137"/>
    </location>
</feature>
<feature type="topological domain" description="Cytoplasmic" evidence="2">
    <location>
        <begin position="138"/>
        <end position="156"/>
    </location>
</feature>
<feature type="transmembrane region" description="Helical; Name=4" evidence="2">
    <location>
        <begin position="157"/>
        <end position="180"/>
    </location>
</feature>
<feature type="topological domain" description="Extracellular" evidence="2">
    <location>
        <begin position="181"/>
        <end position="206"/>
    </location>
</feature>
<feature type="transmembrane region" description="Helical; Name=5" evidence="2">
    <location>
        <begin position="207"/>
        <end position="234"/>
    </location>
</feature>
<feature type="topological domain" description="Cytoplasmic" evidence="2">
    <location>
        <begin position="235"/>
        <end position="256"/>
    </location>
</feature>
<feature type="transmembrane region" description="Helical; Name=6" evidence="2">
    <location>
        <begin position="257"/>
        <end position="280"/>
    </location>
</feature>
<feature type="topological domain" description="Extracellular" evidence="2">
    <location>
        <begin position="281"/>
        <end position="288"/>
    </location>
</feature>
<feature type="transmembrane region" description="Helical; Name=7" evidence="2">
    <location>
        <begin position="289"/>
        <end position="313"/>
    </location>
</feature>
<feature type="topological domain" description="Cytoplasmic" evidence="2">
    <location>
        <begin position="314"/>
        <end position="351"/>
    </location>
</feature>
<feature type="modified residue" description="N6-(retinylidene)lysine" evidence="1">
    <location>
        <position position="300"/>
    </location>
</feature>
<feature type="glycosylation site" description="N-linked (GlcNAc...) asparagine" evidence="2">
    <location>
        <position position="21"/>
    </location>
</feature>
<feature type="disulfide bond" evidence="3">
    <location>
        <begin position="114"/>
        <end position="191"/>
    </location>
</feature>
<comment type="function">
    <text>Visual pigments are the light-absorbing molecules that mediate vision. They consist of an apoprotein, opsin, covalently linked to cis-retinal.</text>
</comment>
<comment type="biophysicochemical properties">
    <absorption>
        <max>441 nm</max>
    </absorption>
</comment>
<comment type="subcellular location">
    <subcellularLocation>
        <location>Membrane</location>
        <topology>Multi-pass membrane protein</topology>
    </subcellularLocation>
</comment>
<comment type="tissue specificity">
    <text>The color pigments are found in the cone photoreceptor cells.</text>
</comment>
<comment type="PTM">
    <text>Phosphorylated on some or all of the serine and threonine residues present in the C-terminal region.</text>
</comment>
<comment type="similarity">
    <text evidence="3">Belongs to the G-protein coupled receptor 1 family. Opsin subfamily.</text>
</comment>
<keyword id="KW-0157">Chromophore</keyword>
<keyword id="KW-1015">Disulfide bond</keyword>
<keyword id="KW-0297">G-protein coupled receptor</keyword>
<keyword id="KW-0325">Glycoprotein</keyword>
<keyword id="KW-0472">Membrane</keyword>
<keyword id="KW-0597">Phosphoprotein</keyword>
<keyword id="KW-0600">Photoreceptor protein</keyword>
<keyword id="KW-0675">Receptor</keyword>
<keyword id="KW-1185">Reference proteome</keyword>
<keyword id="KW-0681">Retinal protein</keyword>
<keyword id="KW-0716">Sensory transduction</keyword>
<keyword id="KW-0807">Transducer</keyword>
<keyword id="KW-0812">Transmembrane</keyword>
<keyword id="KW-1133">Transmembrane helix</keyword>
<keyword id="KW-0844">Vision</keyword>
<organism>
    <name type="scientific">Carassius auratus</name>
    <name type="common">Goldfish</name>
    <dbReference type="NCBI Taxonomy" id="7957"/>
    <lineage>
        <taxon>Eukaryota</taxon>
        <taxon>Metazoa</taxon>
        <taxon>Chordata</taxon>
        <taxon>Craniata</taxon>
        <taxon>Vertebrata</taxon>
        <taxon>Euteleostomi</taxon>
        <taxon>Actinopterygii</taxon>
        <taxon>Neopterygii</taxon>
        <taxon>Teleostei</taxon>
        <taxon>Ostariophysi</taxon>
        <taxon>Cypriniformes</taxon>
        <taxon>Cyprinidae</taxon>
        <taxon>Cyprininae</taxon>
        <taxon>Carassius</taxon>
    </lineage>
</organism>
<dbReference type="EMBL" id="L11864">
    <property type="protein sequence ID" value="AAA49164.1"/>
    <property type="molecule type" value="mRNA"/>
</dbReference>
<dbReference type="PIR" id="E45229">
    <property type="entry name" value="E45229"/>
</dbReference>
<dbReference type="RefSeq" id="XP_026131433.1">
    <property type="nucleotide sequence ID" value="XM_026275648.1"/>
</dbReference>
<dbReference type="SMR" id="P32310"/>
<dbReference type="GeneID" id="113111150"/>
<dbReference type="OrthoDB" id="6142583at2759"/>
<dbReference type="Proteomes" id="UP000515129">
    <property type="component" value="Chromosome 11"/>
</dbReference>
<dbReference type="GO" id="GO:0016020">
    <property type="term" value="C:membrane"/>
    <property type="evidence" value="ECO:0000314"/>
    <property type="project" value="UniProtKB"/>
</dbReference>
<dbReference type="GO" id="GO:0004930">
    <property type="term" value="F:G protein-coupled receptor activity"/>
    <property type="evidence" value="ECO:0007669"/>
    <property type="project" value="UniProtKB-KW"/>
</dbReference>
<dbReference type="GO" id="GO:0009881">
    <property type="term" value="F:photoreceptor activity"/>
    <property type="evidence" value="ECO:0007669"/>
    <property type="project" value="UniProtKB-KW"/>
</dbReference>
<dbReference type="GO" id="GO:0007602">
    <property type="term" value="P:phototransduction"/>
    <property type="evidence" value="ECO:0007669"/>
    <property type="project" value="UniProtKB-KW"/>
</dbReference>
<dbReference type="GO" id="GO:0007601">
    <property type="term" value="P:visual perception"/>
    <property type="evidence" value="ECO:0007669"/>
    <property type="project" value="UniProtKB-KW"/>
</dbReference>
<dbReference type="CDD" id="cd15077">
    <property type="entry name" value="7tmA_SWS2_opsin"/>
    <property type="match status" value="1"/>
</dbReference>
<dbReference type="FunFam" id="1.20.1070.10:FF:000018">
    <property type="entry name" value="Rhodopsin"/>
    <property type="match status" value="1"/>
</dbReference>
<dbReference type="Gene3D" id="1.20.1070.10">
    <property type="entry name" value="Rhodopsin 7-helix transmembrane proteins"/>
    <property type="match status" value="1"/>
</dbReference>
<dbReference type="InterPro" id="IPR050125">
    <property type="entry name" value="GPCR_opsins"/>
</dbReference>
<dbReference type="InterPro" id="IPR000276">
    <property type="entry name" value="GPCR_Rhodpsn"/>
</dbReference>
<dbReference type="InterPro" id="IPR017452">
    <property type="entry name" value="GPCR_Rhodpsn_7TM"/>
</dbReference>
<dbReference type="InterPro" id="IPR001760">
    <property type="entry name" value="Opsin"/>
</dbReference>
<dbReference type="InterPro" id="IPR001521">
    <property type="entry name" value="Opsin_blue"/>
</dbReference>
<dbReference type="InterPro" id="IPR027430">
    <property type="entry name" value="Retinal_BS"/>
</dbReference>
<dbReference type="PANTHER" id="PTHR24240">
    <property type="entry name" value="OPSIN"/>
    <property type="match status" value="1"/>
</dbReference>
<dbReference type="Pfam" id="PF00001">
    <property type="entry name" value="7tm_1"/>
    <property type="match status" value="1"/>
</dbReference>
<dbReference type="PRINTS" id="PR00237">
    <property type="entry name" value="GPCRRHODOPSN"/>
</dbReference>
<dbReference type="PRINTS" id="PR00238">
    <property type="entry name" value="OPSIN"/>
</dbReference>
<dbReference type="PRINTS" id="PR00574">
    <property type="entry name" value="OPSINBLUE"/>
</dbReference>
<dbReference type="SUPFAM" id="SSF81321">
    <property type="entry name" value="Family A G protein-coupled receptor-like"/>
    <property type="match status" value="1"/>
</dbReference>
<dbReference type="PROSITE" id="PS00237">
    <property type="entry name" value="G_PROTEIN_RECEP_F1_1"/>
    <property type="match status" value="1"/>
</dbReference>
<dbReference type="PROSITE" id="PS50262">
    <property type="entry name" value="G_PROTEIN_RECEP_F1_2"/>
    <property type="match status" value="1"/>
</dbReference>
<dbReference type="PROSITE" id="PS00238">
    <property type="entry name" value="OPSIN"/>
    <property type="match status" value="1"/>
</dbReference>
<name>OPSB_CARAU</name>
<sequence>MKQVPEFHEDFYIPIPLDINNLSAYSPFLVPQDHLGNQGIFMAMSVFMFFIFIGGASINILTILCTIQFKKLRSHLNYILVNLSIANLFVAIFGSPLSFYSFFNRYFIFGATACKIEGFLATLGGMVGLWSLAVVAFERWLVICKPLGNFTFKTPHAIAGCILPWISALAASLPPLFGWSRYIPEGLQCSCGPDWYTTNNKYNNESYVMFLFCFCFAVPFGTIVFCYGQLLITLKLAAKAQADSASTQKAEREVTKMVVVMVLGFLVCWAPYASFSLWIVSHRGEEFDLRMATIPSCLSKASTVYNPVIYVLMNKQFRSCMMKMVCGKNIEEDEASTSSQVTQVSSVAPEK</sequence>
<protein>
    <recommendedName>
        <fullName>Blue-sensitive opsin</fullName>
    </recommendedName>
    <alternativeName>
        <fullName>Blue cone photoreceptor pigment</fullName>
    </alternativeName>
</protein>
<evidence type="ECO:0000250" key="1"/>
<evidence type="ECO:0000255" key="2"/>
<evidence type="ECO:0000255" key="3">
    <source>
        <dbReference type="PROSITE-ProRule" id="PRU00521"/>
    </source>
</evidence>
<reference key="1">
    <citation type="journal article" date="1993" name="Biochemistry">
        <title>Cloning and expression of goldfish opsin sequences.</title>
        <authorList>
            <person name="Johnson R.L."/>
            <person name="Grant K.B."/>
            <person name="Zankel T.C."/>
            <person name="Boehm M.F."/>
            <person name="Merbs S.L."/>
            <person name="Nathans J."/>
            <person name="Nakanishi K."/>
        </authorList>
    </citation>
    <scope>NUCLEOTIDE SEQUENCE [MRNA]</scope>
</reference>